<evidence type="ECO:0000255" key="1"/>
<evidence type="ECO:0000256" key="2">
    <source>
        <dbReference type="SAM" id="MobiDB-lite"/>
    </source>
</evidence>
<evidence type="ECO:0000269" key="3">
    <source>
    </source>
</evidence>
<evidence type="ECO:0000269" key="4">
    <source>
    </source>
</evidence>
<evidence type="ECO:0000269" key="5">
    <source>
    </source>
</evidence>
<evidence type="ECO:0000269" key="6">
    <source>
    </source>
</evidence>
<evidence type="ECO:0000303" key="7">
    <source>
    </source>
</evidence>
<evidence type="ECO:0000303" key="8">
    <source>
    </source>
</evidence>
<evidence type="ECO:0000305" key="9"/>
<evidence type="ECO:0007744" key="10">
    <source>
        <dbReference type="PDB" id="2QKH"/>
    </source>
</evidence>
<evidence type="ECO:0007829" key="11">
    <source>
        <dbReference type="PDB" id="2QKH"/>
    </source>
</evidence>
<evidence type="ECO:0007829" key="12">
    <source>
        <dbReference type="PDB" id="4HJ0"/>
    </source>
</evidence>
<evidence type="ECO:0007829" key="13">
    <source>
        <dbReference type="PDB" id="6DKJ"/>
    </source>
</evidence>
<evidence type="ECO:0007829" key="14">
    <source>
        <dbReference type="PDB" id="7DTY"/>
    </source>
</evidence>
<evidence type="ECO:0007829" key="15">
    <source>
        <dbReference type="PDB" id="7RA3"/>
    </source>
</evidence>
<evidence type="ECO:0007829" key="16">
    <source>
        <dbReference type="PDB" id="7RBT"/>
    </source>
</evidence>
<evidence type="ECO:0007829" key="17">
    <source>
        <dbReference type="PDB" id="8WA3"/>
    </source>
</evidence>
<protein>
    <recommendedName>
        <fullName>Gastric inhibitory polypeptide receptor</fullName>
        <shortName>GIP-R</shortName>
    </recommendedName>
    <alternativeName>
        <fullName>Glucose-dependent insulinotropic polypeptide receptor</fullName>
    </alternativeName>
</protein>
<keyword id="KW-0002">3D-structure</keyword>
<keyword id="KW-0025">Alternative splicing</keyword>
<keyword id="KW-1003">Cell membrane</keyword>
<keyword id="KW-1015">Disulfide bond</keyword>
<keyword id="KW-0297">G-protein coupled receptor</keyword>
<keyword id="KW-0325">Glycoprotein</keyword>
<keyword id="KW-0472">Membrane</keyword>
<keyword id="KW-0675">Receptor</keyword>
<keyword id="KW-1185">Reference proteome</keyword>
<keyword id="KW-0732">Signal</keyword>
<keyword id="KW-0807">Transducer</keyword>
<keyword id="KW-0812">Transmembrane</keyword>
<keyword id="KW-1133">Transmembrane helix</keyword>
<proteinExistence type="evidence at protein level"/>
<gene>
    <name type="primary">GIPR</name>
</gene>
<name>GIPR_HUMAN</name>
<accession>P48546</accession>
<accession>B7WP14</accession>
<accession>B7ZKQ0</accession>
<accession>Q14401</accession>
<accession>Q16400</accession>
<accession>Q52M04</accession>
<accession>Q9UPI1</accession>
<dbReference type="EMBL" id="U39231">
    <property type="protein sequence ID" value="AAA84418.1"/>
    <property type="molecule type" value="mRNA"/>
</dbReference>
<dbReference type="EMBL" id="S79852">
    <property type="protein sequence ID" value="AAB35419.2"/>
    <property type="molecule type" value="mRNA"/>
</dbReference>
<dbReference type="EMBL" id="X81832">
    <property type="protein sequence ID" value="CAA57426.1"/>
    <property type="status" value="ALT_FRAME"/>
    <property type="molecule type" value="mRNA"/>
</dbReference>
<dbReference type="EMBL" id="D49559">
    <property type="protein sequence ID" value="BAA08503.1"/>
    <property type="molecule type" value="Genomic_DNA"/>
</dbReference>
<dbReference type="EMBL" id="AC006132">
    <property type="protein sequence ID" value="AAC97984.1"/>
    <property type="molecule type" value="Genomic_DNA"/>
</dbReference>
<dbReference type="EMBL" id="AC007191">
    <property type="protein sequence ID" value="AAD22674.1"/>
    <property type="molecule type" value="Genomic_DNA"/>
</dbReference>
<dbReference type="EMBL" id="BC093723">
    <property type="protein sequence ID" value="AAH93723.1"/>
    <property type="molecule type" value="mRNA"/>
</dbReference>
<dbReference type="EMBL" id="BC101673">
    <property type="protein sequence ID" value="AAI01674.1"/>
    <property type="molecule type" value="mRNA"/>
</dbReference>
<dbReference type="EMBL" id="BC143300">
    <property type="protein sequence ID" value="AAI43301.1"/>
    <property type="molecule type" value="mRNA"/>
</dbReference>
<dbReference type="CCDS" id="CCDS12671.1">
    <molecule id="P48546-1"/>
</dbReference>
<dbReference type="CCDS" id="CCDS82367.1">
    <molecule id="P48546-3"/>
</dbReference>
<dbReference type="PIR" id="G02234">
    <property type="entry name" value="G02234"/>
</dbReference>
<dbReference type="PIR" id="I37411">
    <property type="entry name" value="I37411"/>
</dbReference>
<dbReference type="PIR" id="S66676">
    <property type="entry name" value="S66676"/>
</dbReference>
<dbReference type="RefSeq" id="NP_000155.1">
    <molecule id="P48546-1"/>
    <property type="nucleotide sequence ID" value="NM_000164.4"/>
</dbReference>
<dbReference type="RefSeq" id="NP_001295347.1">
    <molecule id="P48546-3"/>
    <property type="nucleotide sequence ID" value="NM_001308418.2"/>
</dbReference>
<dbReference type="RefSeq" id="XP_047294556.1">
    <molecule id="P48546-1"/>
    <property type="nucleotide sequence ID" value="XM_047438600.1"/>
</dbReference>
<dbReference type="PDB" id="2QKH">
    <property type="method" value="X-ray"/>
    <property type="resolution" value="1.90 A"/>
    <property type="chains" value="A=24-138"/>
</dbReference>
<dbReference type="PDB" id="4HJ0">
    <property type="method" value="X-ray"/>
    <property type="resolution" value="3.00 A"/>
    <property type="chains" value="A/B=24-138"/>
</dbReference>
<dbReference type="PDB" id="6DKJ">
    <property type="method" value="X-ray"/>
    <property type="resolution" value="1.95 A"/>
    <property type="chains" value="C/D=22-138"/>
</dbReference>
<dbReference type="PDB" id="7DTY">
    <property type="method" value="EM"/>
    <property type="resolution" value="2.98 A"/>
    <property type="chains" value="R=22-421"/>
</dbReference>
<dbReference type="PDB" id="7FIN">
    <property type="method" value="EM"/>
    <property type="resolution" value="3.10 A"/>
    <property type="chains" value="R=22-421"/>
</dbReference>
<dbReference type="PDB" id="7FIY">
    <property type="method" value="EM"/>
    <property type="resolution" value="3.40 A"/>
    <property type="chains" value="R=22-421"/>
</dbReference>
<dbReference type="PDB" id="7RA3">
    <property type="method" value="EM"/>
    <property type="resolution" value="3.24 A"/>
    <property type="chains" value="R=22-466"/>
</dbReference>
<dbReference type="PDB" id="7RBT">
    <property type="method" value="EM"/>
    <property type="resolution" value="3.08 A"/>
    <property type="chains" value="R=22-466"/>
</dbReference>
<dbReference type="PDB" id="7VAB">
    <property type="method" value="EM"/>
    <property type="resolution" value="3.20 A"/>
    <property type="chains" value="R=22-421"/>
</dbReference>
<dbReference type="PDB" id="8ITL">
    <property type="method" value="EM"/>
    <property type="resolution" value="3.23 A"/>
    <property type="chains" value="R=22-421"/>
</dbReference>
<dbReference type="PDB" id="8ITM">
    <property type="method" value="EM"/>
    <property type="resolution" value="3.13 A"/>
    <property type="chains" value="R=94-421"/>
</dbReference>
<dbReference type="PDB" id="8WA3">
    <property type="method" value="EM"/>
    <property type="resolution" value="2.86 A"/>
    <property type="chains" value="R=22-421"/>
</dbReference>
<dbReference type="PDB" id="8YW4">
    <property type="method" value="EM"/>
    <property type="resolution" value="3.26 A"/>
    <property type="chains" value="R=22-421"/>
</dbReference>
<dbReference type="PDBsum" id="2QKH"/>
<dbReference type="PDBsum" id="4HJ0"/>
<dbReference type="PDBsum" id="6DKJ"/>
<dbReference type="PDBsum" id="7DTY"/>
<dbReference type="PDBsum" id="7FIN"/>
<dbReference type="PDBsum" id="7FIY"/>
<dbReference type="PDBsum" id="7RA3"/>
<dbReference type="PDBsum" id="7RBT"/>
<dbReference type="PDBsum" id="7VAB"/>
<dbReference type="PDBsum" id="8ITL"/>
<dbReference type="PDBsum" id="8ITM"/>
<dbReference type="PDBsum" id="8WA3"/>
<dbReference type="PDBsum" id="8YW4"/>
<dbReference type="EMDB" id="EMD-24334"/>
<dbReference type="EMDB" id="EMD-24401"/>
<dbReference type="EMDB" id="EMD-30860"/>
<dbReference type="EMDB" id="EMD-31604"/>
<dbReference type="EMDB" id="EMD-31606"/>
<dbReference type="EMDB" id="EMD-31836"/>
<dbReference type="EMDB" id="EMD-35706"/>
<dbReference type="EMDB" id="EMD-35707"/>
<dbReference type="EMDB" id="EMD-37390"/>
<dbReference type="EMDB" id="EMD-39622"/>
<dbReference type="SMR" id="P48546"/>
<dbReference type="BioGRID" id="108963">
    <property type="interactions" value="2"/>
</dbReference>
<dbReference type="CORUM" id="P48546"/>
<dbReference type="DIP" id="DIP-46468N"/>
<dbReference type="FunCoup" id="P48546">
    <property type="interactions" value="916"/>
</dbReference>
<dbReference type="IntAct" id="P48546">
    <property type="interactions" value="2"/>
</dbReference>
<dbReference type="STRING" id="9606.ENSP00000467494"/>
<dbReference type="BindingDB" id="P48546"/>
<dbReference type="ChEMBL" id="CHEMBL4383"/>
<dbReference type="DrugBank" id="DB15171">
    <property type="generic name" value="Tirzepatide"/>
</dbReference>
<dbReference type="DrugCentral" id="P48546"/>
<dbReference type="GuidetoPHARMACOLOGY" id="248"/>
<dbReference type="TCDB" id="9.A.14.4.5">
    <property type="family name" value="the g-protein-coupled receptor (gpcr) family"/>
</dbReference>
<dbReference type="GlyCosmos" id="P48546">
    <property type="glycosylation" value="2 sites, No reported glycans"/>
</dbReference>
<dbReference type="GlyGen" id="P48546">
    <property type="glycosylation" value="2 sites"/>
</dbReference>
<dbReference type="iPTMnet" id="P48546"/>
<dbReference type="PhosphoSitePlus" id="P48546"/>
<dbReference type="BioMuta" id="GIPR"/>
<dbReference type="DMDM" id="1346133"/>
<dbReference type="PaxDb" id="9606-ENSP00000467494"/>
<dbReference type="PeptideAtlas" id="P48546"/>
<dbReference type="ABCD" id="P48546">
    <property type="antibodies" value="2 sequenced antibodies"/>
</dbReference>
<dbReference type="Antibodypedia" id="17982">
    <property type="antibodies" value="621 antibodies from 33 providers"/>
</dbReference>
<dbReference type="DNASU" id="2696"/>
<dbReference type="Ensembl" id="ENST00000263281.7">
    <molecule id="P48546-2"/>
    <property type="protein sequence ID" value="ENSP00000263281.3"/>
    <property type="gene ID" value="ENSG00000010310.9"/>
</dbReference>
<dbReference type="Ensembl" id="ENST00000304207.12">
    <molecule id="P48546-3"/>
    <property type="protein sequence ID" value="ENSP00000305321.8"/>
    <property type="gene ID" value="ENSG00000010310.9"/>
</dbReference>
<dbReference type="Ensembl" id="ENST00000590918.6">
    <molecule id="P48546-1"/>
    <property type="protein sequence ID" value="ENSP00000467494.1"/>
    <property type="gene ID" value="ENSG00000010310.9"/>
</dbReference>
<dbReference type="GeneID" id="2696"/>
<dbReference type="KEGG" id="hsa:2696"/>
<dbReference type="MANE-Select" id="ENST00000590918.6">
    <property type="protein sequence ID" value="ENSP00000467494.1"/>
    <property type="RefSeq nucleotide sequence ID" value="NM_000164.4"/>
    <property type="RefSeq protein sequence ID" value="NP_000155.1"/>
</dbReference>
<dbReference type="UCSC" id="uc002pct.2">
    <molecule id="P48546-1"/>
    <property type="organism name" value="human"/>
</dbReference>
<dbReference type="AGR" id="HGNC:4271"/>
<dbReference type="CTD" id="2696"/>
<dbReference type="DisGeNET" id="2696"/>
<dbReference type="GeneCards" id="GIPR"/>
<dbReference type="HGNC" id="HGNC:4271">
    <property type="gene designation" value="GIPR"/>
</dbReference>
<dbReference type="HPA" id="ENSG00000010310">
    <property type="expression patterns" value="Tissue enhanced (stomach)"/>
</dbReference>
<dbReference type="MIM" id="137241">
    <property type="type" value="gene"/>
</dbReference>
<dbReference type="neXtProt" id="NX_P48546"/>
<dbReference type="OpenTargets" id="ENSG00000010310"/>
<dbReference type="PharmGKB" id="PA28682"/>
<dbReference type="VEuPathDB" id="HostDB:ENSG00000010310"/>
<dbReference type="eggNOG" id="KOG4564">
    <property type="taxonomic scope" value="Eukaryota"/>
</dbReference>
<dbReference type="GeneTree" id="ENSGT00940000161988"/>
<dbReference type="HOGENOM" id="CLU_002753_4_0_1"/>
<dbReference type="InParanoid" id="P48546"/>
<dbReference type="OMA" id="LNCPPWR"/>
<dbReference type="OrthoDB" id="5967113at2759"/>
<dbReference type="PAN-GO" id="P48546">
    <property type="GO annotations" value="5 GO annotations based on evolutionary models"/>
</dbReference>
<dbReference type="PhylomeDB" id="P48546"/>
<dbReference type="PathwayCommons" id="P48546"/>
<dbReference type="Reactome" id="R-HSA-418555">
    <property type="pathway name" value="G alpha (s) signalling events"/>
</dbReference>
<dbReference type="Reactome" id="R-HSA-420092">
    <property type="pathway name" value="Glucagon-type ligand receptors"/>
</dbReference>
<dbReference type="SignaLink" id="P48546"/>
<dbReference type="SIGNOR" id="P48546"/>
<dbReference type="BioGRID-ORCS" id="2696">
    <property type="hits" value="24 hits in 1152 CRISPR screens"/>
</dbReference>
<dbReference type="ChiTaRS" id="GIPR">
    <property type="organism name" value="human"/>
</dbReference>
<dbReference type="EvolutionaryTrace" id="P48546"/>
<dbReference type="GeneWiki" id="Gastric_inhibitory_polypeptide_receptor"/>
<dbReference type="GenomeRNAi" id="2696"/>
<dbReference type="Pharos" id="P48546">
    <property type="development level" value="Tchem"/>
</dbReference>
<dbReference type="PRO" id="PR:P48546"/>
<dbReference type="Proteomes" id="UP000005640">
    <property type="component" value="Chromosome 19"/>
</dbReference>
<dbReference type="RNAct" id="P48546">
    <property type="molecule type" value="protein"/>
</dbReference>
<dbReference type="Bgee" id="ENSG00000010310">
    <property type="expression patterns" value="Expressed in right uterine tube and 117 other cell types or tissues"/>
</dbReference>
<dbReference type="ExpressionAtlas" id="P48546">
    <property type="expression patterns" value="baseline and differential"/>
</dbReference>
<dbReference type="GO" id="GO:0016020">
    <property type="term" value="C:membrane"/>
    <property type="evidence" value="ECO:0000304"/>
    <property type="project" value="ProtInc"/>
</dbReference>
<dbReference type="GO" id="GO:0005886">
    <property type="term" value="C:plasma membrane"/>
    <property type="evidence" value="ECO:0000318"/>
    <property type="project" value="GO_Central"/>
</dbReference>
<dbReference type="GO" id="GO:0008528">
    <property type="term" value="F:G protein-coupled peptide receptor activity"/>
    <property type="evidence" value="ECO:0000318"/>
    <property type="project" value="GO_Central"/>
</dbReference>
<dbReference type="GO" id="GO:0016519">
    <property type="term" value="F:gastric inhibitory peptide receptor activity"/>
    <property type="evidence" value="ECO:0000314"/>
    <property type="project" value="BHF-UCL"/>
</dbReference>
<dbReference type="GO" id="GO:0120022">
    <property type="term" value="F:glucagon family peptide binding"/>
    <property type="evidence" value="ECO:0000353"/>
    <property type="project" value="BHF-UCL"/>
</dbReference>
<dbReference type="GO" id="GO:0017046">
    <property type="term" value="F:peptide hormone binding"/>
    <property type="evidence" value="ECO:0000353"/>
    <property type="project" value="BHF-UCL"/>
</dbReference>
<dbReference type="GO" id="GO:0004888">
    <property type="term" value="F:transmembrane signaling receptor activity"/>
    <property type="evidence" value="ECO:0000304"/>
    <property type="project" value="ProtInc"/>
</dbReference>
<dbReference type="GO" id="GO:0007190">
    <property type="term" value="P:activation of adenylate cyclase activity"/>
    <property type="evidence" value="ECO:0000304"/>
    <property type="project" value="ProtInc"/>
</dbReference>
<dbReference type="GO" id="GO:0007189">
    <property type="term" value="P:adenylate cyclase-activating G protein-coupled receptor signaling pathway"/>
    <property type="evidence" value="ECO:0000314"/>
    <property type="project" value="BHF-UCL"/>
</dbReference>
<dbReference type="GO" id="GO:0007188">
    <property type="term" value="P:adenylate cyclase-modulating G protein-coupled receptor signaling pathway"/>
    <property type="evidence" value="ECO:0000318"/>
    <property type="project" value="GO_Central"/>
</dbReference>
<dbReference type="GO" id="GO:0007166">
    <property type="term" value="P:cell surface receptor signaling pathway"/>
    <property type="evidence" value="ECO:0000304"/>
    <property type="project" value="ProtInc"/>
</dbReference>
<dbReference type="GO" id="GO:0002029">
    <property type="term" value="P:desensitization of G protein-coupled receptor signaling pathway"/>
    <property type="evidence" value="ECO:0007669"/>
    <property type="project" value="Ensembl"/>
</dbReference>
<dbReference type="GO" id="GO:0031018">
    <property type="term" value="P:endocrine pancreas development"/>
    <property type="evidence" value="ECO:0007669"/>
    <property type="project" value="Ensembl"/>
</dbReference>
<dbReference type="GO" id="GO:0038192">
    <property type="term" value="P:gastric inhibitory peptide signaling pathway"/>
    <property type="evidence" value="ECO:0000314"/>
    <property type="project" value="BHF-UCL"/>
</dbReference>
<dbReference type="GO" id="GO:0006091">
    <property type="term" value="P:generation of precursor metabolites and energy"/>
    <property type="evidence" value="ECO:0000304"/>
    <property type="project" value="ProtInc"/>
</dbReference>
<dbReference type="GO" id="GO:0007204">
    <property type="term" value="P:positive regulation of cytosolic calcium ion concentration"/>
    <property type="evidence" value="ECO:0007669"/>
    <property type="project" value="Ensembl"/>
</dbReference>
<dbReference type="GO" id="GO:0032024">
    <property type="term" value="P:positive regulation of insulin secretion"/>
    <property type="evidence" value="ECO:0007669"/>
    <property type="project" value="Ensembl"/>
</dbReference>
<dbReference type="GO" id="GO:0050796">
    <property type="term" value="P:regulation of insulin secretion"/>
    <property type="evidence" value="ECO:0000304"/>
    <property type="project" value="ParkinsonsUK-UCL"/>
</dbReference>
<dbReference type="GO" id="GO:0048678">
    <property type="term" value="P:response to axon injury"/>
    <property type="evidence" value="ECO:0007669"/>
    <property type="project" value="Ensembl"/>
</dbReference>
<dbReference type="GO" id="GO:0051592">
    <property type="term" value="P:response to calcium ion"/>
    <property type="evidence" value="ECO:0007669"/>
    <property type="project" value="Ensembl"/>
</dbReference>
<dbReference type="GO" id="GO:0070542">
    <property type="term" value="P:response to fatty acid"/>
    <property type="evidence" value="ECO:0007669"/>
    <property type="project" value="Ensembl"/>
</dbReference>
<dbReference type="GO" id="GO:0009749">
    <property type="term" value="P:response to glucose"/>
    <property type="evidence" value="ECO:0007669"/>
    <property type="project" value="Ensembl"/>
</dbReference>
<dbReference type="GO" id="GO:0007584">
    <property type="term" value="P:response to nutrient"/>
    <property type="evidence" value="ECO:0000304"/>
    <property type="project" value="ProtInc"/>
</dbReference>
<dbReference type="CDD" id="cd15929">
    <property type="entry name" value="7tmB1_GlucagonR-like"/>
    <property type="match status" value="1"/>
</dbReference>
<dbReference type="FunFam" id="1.20.1070.10:FF:000229">
    <property type="entry name" value="Gastric inhibitory polypeptide receptor"/>
    <property type="match status" value="1"/>
</dbReference>
<dbReference type="FunFam" id="4.10.1240.10:FF:000019">
    <property type="entry name" value="Gastric inhibitory polypeptide receptor"/>
    <property type="match status" value="1"/>
</dbReference>
<dbReference type="Gene3D" id="4.10.1240.10">
    <property type="entry name" value="GPCR, family 2, extracellular hormone receptor domain"/>
    <property type="match status" value="1"/>
</dbReference>
<dbReference type="Gene3D" id="1.20.1070.10">
    <property type="entry name" value="Rhodopsin 7-helix transmembrane proteins"/>
    <property type="match status" value="1"/>
</dbReference>
<dbReference type="InterPro" id="IPR050332">
    <property type="entry name" value="GPCR_2"/>
</dbReference>
<dbReference type="InterPro" id="IPR017981">
    <property type="entry name" value="GPCR_2-like_7TM"/>
</dbReference>
<dbReference type="InterPro" id="IPR036445">
    <property type="entry name" value="GPCR_2_extracell_dom_sf"/>
</dbReference>
<dbReference type="InterPro" id="IPR001879">
    <property type="entry name" value="GPCR_2_extracellular_dom"/>
</dbReference>
<dbReference type="InterPro" id="IPR001749">
    <property type="entry name" value="GPCR_2_GIP_rcpt"/>
</dbReference>
<dbReference type="InterPro" id="IPR000832">
    <property type="entry name" value="GPCR_2_secretin-like"/>
</dbReference>
<dbReference type="InterPro" id="IPR017983">
    <property type="entry name" value="GPCR_2_secretin-like_CS"/>
</dbReference>
<dbReference type="PANTHER" id="PTHR45620:SF5">
    <property type="entry name" value="GASTRIC INHIBITORY POLYPEPTIDE RECEPTOR"/>
    <property type="match status" value="1"/>
</dbReference>
<dbReference type="PANTHER" id="PTHR45620">
    <property type="entry name" value="PDF RECEPTOR-LIKE PROTEIN-RELATED"/>
    <property type="match status" value="1"/>
</dbReference>
<dbReference type="Pfam" id="PF00002">
    <property type="entry name" value="7tm_2"/>
    <property type="match status" value="1"/>
</dbReference>
<dbReference type="Pfam" id="PF02793">
    <property type="entry name" value="HRM"/>
    <property type="match status" value="1"/>
</dbReference>
<dbReference type="PRINTS" id="PR01129">
    <property type="entry name" value="GIPRECEPTOR"/>
</dbReference>
<dbReference type="PRINTS" id="PR00249">
    <property type="entry name" value="GPCRSECRETIN"/>
</dbReference>
<dbReference type="SMART" id="SM00008">
    <property type="entry name" value="HormR"/>
    <property type="match status" value="1"/>
</dbReference>
<dbReference type="SUPFAM" id="SSF81321">
    <property type="entry name" value="Family A G protein-coupled receptor-like"/>
    <property type="match status" value="1"/>
</dbReference>
<dbReference type="SUPFAM" id="SSF111418">
    <property type="entry name" value="Hormone receptor domain"/>
    <property type="match status" value="1"/>
</dbReference>
<dbReference type="PROSITE" id="PS00649">
    <property type="entry name" value="G_PROTEIN_RECEP_F2_1"/>
    <property type="match status" value="1"/>
</dbReference>
<dbReference type="PROSITE" id="PS00650">
    <property type="entry name" value="G_PROTEIN_RECEP_F2_2"/>
    <property type="match status" value="1"/>
</dbReference>
<dbReference type="PROSITE" id="PS50227">
    <property type="entry name" value="G_PROTEIN_RECEP_F2_3"/>
    <property type="match status" value="1"/>
</dbReference>
<dbReference type="PROSITE" id="PS50261">
    <property type="entry name" value="G_PROTEIN_RECEP_F2_4"/>
    <property type="match status" value="1"/>
</dbReference>
<reference key="1">
    <citation type="submission" date="1995-10" db="EMBL/GenBank/DDBJ databases">
        <title>The human GIP receptor: gene structure, functional expression of its cDNA, and chromosomal location.</title>
        <authorList>
            <person name="Usdin T.B."/>
            <person name="Gruber C."/>
            <person name="Modi W."/>
            <person name="Bonner T.I."/>
        </authorList>
    </citation>
    <scope>NUCLEOTIDE SEQUENCE [MRNA] (ISOFORM 1)</scope>
</reference>
<reference key="2">
    <citation type="journal article" date="1995" name="FEBS Lett.">
        <title>Molecular cloning, functional expression, and signal transduction of the GIP-receptor cloned from a human insulinoma.</title>
        <authorList>
            <person name="Volz A."/>
            <person name="Goke R."/>
            <person name="Lankat-Buttgereit B."/>
            <person name="Fehmann H.C."/>
            <person name="Bode H.P."/>
            <person name="Goke B."/>
        </authorList>
    </citation>
    <scope>NUCLEOTIDE SEQUENCE [MRNA] (ISOFORM 1)</scope>
    <scope>FUNCTION</scope>
</reference>
<reference key="3">
    <citation type="journal article" date="1995" name="Diabetes">
        <title>Cloning, functional expression, and chromosomal localization of the human pancreatic islet glucose-dependent insulinotropic polypeptide receptor.</title>
        <authorList>
            <person name="Gremlich S."/>
            <person name="Porret A."/>
            <person name="Hani E.H."/>
            <person name="Cherif D."/>
            <person name="Vionnet N."/>
            <person name="Froguel P."/>
            <person name="Thorens B."/>
        </authorList>
    </citation>
    <scope>NUCLEOTIDE SEQUENCE [MRNA] (ISOFORM 2)</scope>
    <scope>FUNCTION</scope>
    <source>
        <tissue>Pancreas</tissue>
    </source>
</reference>
<reference key="4">
    <citation type="journal article" date="1995" name="Genomics">
        <title>Human gastric inhibitory polypeptide receptor: cloning of the gene (GIPR) and cDNA.</title>
        <authorList>
            <person name="Yamada Y."/>
            <person name="Hayami T."/>
            <person name="Nakamura K."/>
            <person name="Kaisaki P.J."/>
            <person name="Someya Y."/>
            <person name="Wang C.Z."/>
            <person name="Seino S."/>
            <person name="Seino Y."/>
        </authorList>
    </citation>
    <scope>NUCLEOTIDE SEQUENCE [GENOMIC DNA] (ISOFORM 1)</scope>
</reference>
<reference key="5">
    <citation type="journal article" date="2004" name="Nature">
        <title>The DNA sequence and biology of human chromosome 19.</title>
        <authorList>
            <person name="Grimwood J."/>
            <person name="Gordon L.A."/>
            <person name="Olsen A.S."/>
            <person name="Terry A."/>
            <person name="Schmutz J."/>
            <person name="Lamerdin J.E."/>
            <person name="Hellsten U."/>
            <person name="Goodstein D."/>
            <person name="Couronne O."/>
            <person name="Tran-Gyamfi M."/>
            <person name="Aerts A."/>
            <person name="Altherr M."/>
            <person name="Ashworth L."/>
            <person name="Bajorek E."/>
            <person name="Black S."/>
            <person name="Branscomb E."/>
            <person name="Caenepeel S."/>
            <person name="Carrano A.V."/>
            <person name="Caoile C."/>
            <person name="Chan Y.M."/>
            <person name="Christensen M."/>
            <person name="Cleland C.A."/>
            <person name="Copeland A."/>
            <person name="Dalin E."/>
            <person name="Dehal P."/>
            <person name="Denys M."/>
            <person name="Detter J.C."/>
            <person name="Escobar J."/>
            <person name="Flowers D."/>
            <person name="Fotopulos D."/>
            <person name="Garcia C."/>
            <person name="Georgescu A.M."/>
            <person name="Glavina T."/>
            <person name="Gomez M."/>
            <person name="Gonzales E."/>
            <person name="Groza M."/>
            <person name="Hammon N."/>
            <person name="Hawkins T."/>
            <person name="Haydu L."/>
            <person name="Ho I."/>
            <person name="Huang W."/>
            <person name="Israni S."/>
            <person name="Jett J."/>
            <person name="Kadner K."/>
            <person name="Kimball H."/>
            <person name="Kobayashi A."/>
            <person name="Larionov V."/>
            <person name="Leem S.-H."/>
            <person name="Lopez F."/>
            <person name="Lou Y."/>
            <person name="Lowry S."/>
            <person name="Malfatti S."/>
            <person name="Martinez D."/>
            <person name="McCready P.M."/>
            <person name="Medina C."/>
            <person name="Morgan J."/>
            <person name="Nelson K."/>
            <person name="Nolan M."/>
            <person name="Ovcharenko I."/>
            <person name="Pitluck S."/>
            <person name="Pollard M."/>
            <person name="Popkie A.P."/>
            <person name="Predki P."/>
            <person name="Quan G."/>
            <person name="Ramirez L."/>
            <person name="Rash S."/>
            <person name="Retterer J."/>
            <person name="Rodriguez A."/>
            <person name="Rogers S."/>
            <person name="Salamov A."/>
            <person name="Salazar A."/>
            <person name="She X."/>
            <person name="Smith D."/>
            <person name="Slezak T."/>
            <person name="Solovyev V."/>
            <person name="Thayer N."/>
            <person name="Tice H."/>
            <person name="Tsai M."/>
            <person name="Ustaszewska A."/>
            <person name="Vo N."/>
            <person name="Wagner M."/>
            <person name="Wheeler J."/>
            <person name="Wu K."/>
            <person name="Xie G."/>
            <person name="Yang J."/>
            <person name="Dubchak I."/>
            <person name="Furey T.S."/>
            <person name="DeJong P."/>
            <person name="Dickson M."/>
            <person name="Gordon D."/>
            <person name="Eichler E.E."/>
            <person name="Pennacchio L.A."/>
            <person name="Richardson P."/>
            <person name="Stubbs L."/>
            <person name="Rokhsar D.S."/>
            <person name="Myers R.M."/>
            <person name="Rubin E.M."/>
            <person name="Lucas S.M."/>
        </authorList>
    </citation>
    <scope>NUCLEOTIDE SEQUENCE [LARGE SCALE GENOMIC DNA]</scope>
</reference>
<reference key="6">
    <citation type="journal article" date="2004" name="Genome Res.">
        <title>The status, quality, and expansion of the NIH full-length cDNA project: the Mammalian Gene Collection (MGC).</title>
        <authorList>
            <consortium name="The MGC Project Team"/>
        </authorList>
    </citation>
    <scope>NUCLEOTIDE SEQUENCE [LARGE SCALE MRNA] (ISOFORMS 1 AND 3)</scope>
    <source>
        <tissue>Colon</tissue>
    </source>
</reference>
<reference key="7">
    <citation type="journal article" date="2012" name="PLoS ONE">
        <title>Regulation of GIP and GLP1 receptor cell surface expression by N-glycosylation and receptor heteromerization.</title>
        <authorList>
            <person name="Whitaker G.M."/>
            <person name="Lynn F.C."/>
            <person name="McIntosh C.H."/>
            <person name="Accili E.A."/>
        </authorList>
    </citation>
    <scope>GLYCOSYLATION AT ASN-62 AND ASN-77</scope>
    <scope>SUBUNIT</scope>
</reference>
<reference evidence="10" key="8">
    <citation type="journal article" date="2007" name="Proc. Natl. Acad. Sci. U.S.A.">
        <title>Crystal structure of the incretin-bound extracellular domain of a G protein-coupled receptor.</title>
        <authorList>
            <person name="Parthier C."/>
            <person name="Kleinschmidt M."/>
            <person name="Neumann P."/>
            <person name="Rudolph R."/>
            <person name="Manhart S."/>
            <person name="Schlenzig D."/>
            <person name="Fanghanel J."/>
            <person name="Rahfeld J.-U."/>
            <person name="Demuth H.-U."/>
            <person name="Stubbs M.T."/>
        </authorList>
    </citation>
    <scope>X-RAY CRYSTALLOGRAPHY (1.9 ANGSTROMS) OF 24-138 IN COMPLEX WITH GIP</scope>
    <scope>DISULFIDE BONDS</scope>
</reference>
<feature type="signal peptide" evidence="1">
    <location>
        <begin position="1"/>
        <end position="21"/>
    </location>
</feature>
<feature type="chain" id="PRO_0000012825" description="Gastric inhibitory polypeptide receptor">
    <location>
        <begin position="22"/>
        <end position="466"/>
    </location>
</feature>
<feature type="topological domain" description="Extracellular" evidence="1">
    <location>
        <begin position="22"/>
        <end position="138"/>
    </location>
</feature>
<feature type="transmembrane region" description="Helical; Name=1" evidence="1">
    <location>
        <begin position="139"/>
        <end position="161"/>
    </location>
</feature>
<feature type="topological domain" description="Cytoplasmic" evidence="1">
    <location>
        <begin position="162"/>
        <end position="169"/>
    </location>
</feature>
<feature type="transmembrane region" description="Helical; Name=2" evidence="1">
    <location>
        <begin position="170"/>
        <end position="189"/>
    </location>
</feature>
<feature type="topological domain" description="Extracellular" evidence="1">
    <location>
        <begin position="190"/>
        <end position="217"/>
    </location>
</feature>
<feature type="transmembrane region" description="Helical; Name=3" evidence="1">
    <location>
        <begin position="218"/>
        <end position="242"/>
    </location>
</feature>
<feature type="topological domain" description="Cytoplasmic" evidence="1">
    <location>
        <begin position="243"/>
        <end position="254"/>
    </location>
</feature>
<feature type="transmembrane region" description="Helical; Name=4" evidence="1">
    <location>
        <begin position="255"/>
        <end position="278"/>
    </location>
</feature>
<feature type="topological domain" description="Extracellular" evidence="1">
    <location>
        <begin position="279"/>
        <end position="293"/>
    </location>
</feature>
<feature type="transmembrane region" description="Helical; Name=5" evidence="1">
    <location>
        <begin position="294"/>
        <end position="319"/>
    </location>
</feature>
<feature type="topological domain" description="Cytoplasmic" evidence="1">
    <location>
        <begin position="320"/>
        <end position="341"/>
    </location>
</feature>
<feature type="transmembrane region" description="Helical; Name=6" evidence="1">
    <location>
        <begin position="342"/>
        <end position="362"/>
    </location>
</feature>
<feature type="topological domain" description="Extracellular" evidence="1">
    <location>
        <begin position="363"/>
        <end position="377"/>
    </location>
</feature>
<feature type="transmembrane region" description="Helical; Name=7" evidence="1">
    <location>
        <begin position="378"/>
        <end position="398"/>
    </location>
</feature>
<feature type="topological domain" description="Cytoplasmic" evidence="1">
    <location>
        <begin position="399"/>
        <end position="466"/>
    </location>
</feature>
<feature type="region of interest" description="Disordered" evidence="2">
    <location>
        <begin position="427"/>
        <end position="466"/>
    </location>
</feature>
<feature type="glycosylation site" description="N-linked (GlcNAc...) asparagine" evidence="4">
    <location>
        <position position="62"/>
    </location>
</feature>
<feature type="glycosylation site" description="N-linked (GlcNAc...) asparagine" evidence="4">
    <location>
        <position position="77"/>
    </location>
</feature>
<feature type="disulfide bond" evidence="3 10">
    <location>
        <begin position="46"/>
        <end position="70"/>
    </location>
</feature>
<feature type="disulfide bond" evidence="3 10">
    <location>
        <begin position="61"/>
        <end position="103"/>
    </location>
</feature>
<feature type="disulfide bond" evidence="3 10">
    <location>
        <begin position="84"/>
        <end position="118"/>
    </location>
</feature>
<feature type="splice variant" id="VSP_053866" description="In isoform 3." evidence="7">
    <location>
        <begin position="58"/>
        <end position="93"/>
    </location>
</feature>
<feature type="splice variant" id="VSP_053867" description="In isoform 2." evidence="8">
    <original>QSEIRRGWHHCRLRRSLGEE</original>
    <variation>GRDPAAAPALWRQRGVRRRL</variation>
    <location>
        <begin position="400"/>
        <end position="419"/>
    </location>
</feature>
<feature type="splice variant" id="VSP_053868" description="In isoform 2." evidence="8">
    <location>
        <begin position="420"/>
        <end position="466"/>
    </location>
</feature>
<feature type="sequence variant" id="VAR_029333" description="In dbSNP:rs13306402.">
    <original>R</original>
    <variation>W</variation>
    <location>
        <position position="136"/>
    </location>
</feature>
<feature type="sequence variant" id="VAR_011808" description="In dbSNP:rs1800436.">
    <original>A</original>
    <variation>V</variation>
    <location>
        <position position="207"/>
    </location>
</feature>
<feature type="sequence variant" id="VAR_011809" description="In dbSNP:rs5392.">
    <original>L</original>
    <variation>V</variation>
    <location>
        <position position="262"/>
    </location>
</feature>
<feature type="sequence variant" id="VAR_011810" description="In dbSNP:rs1800437.">
    <original>E</original>
    <variation>Q</variation>
    <location>
        <position position="354"/>
    </location>
</feature>
<feature type="sequence conflict" description="In Ref. 2; AAB35419." evidence="9" ref="2">
    <original>R</original>
    <variation>G</variation>
    <location>
        <position position="12"/>
    </location>
</feature>
<feature type="sequence conflict" description="In Ref. 2; AAB35419." evidence="9" ref="2">
    <original>G</original>
    <variation>R</variation>
    <location>
        <position position="104"/>
    </location>
</feature>
<feature type="sequence conflict" description="In Ref. 3; CAA57426." evidence="9" ref="3">
    <location>
        <position position="117"/>
    </location>
</feature>
<feature type="sequence conflict" description="In Ref. 2; AAB35419." evidence="9" ref="2">
    <original>L</original>
    <variation>V</variation>
    <location>
        <position position="337"/>
    </location>
</feature>
<feature type="sequence conflict" description="In Ref. 3; CAA57426." evidence="9" ref="3">
    <original>GALRF</original>
    <variation>APCV</variation>
    <location>
        <begin position="367"/>
        <end position="371"/>
    </location>
</feature>
<feature type="helix" evidence="11">
    <location>
        <begin position="32"/>
        <end position="52"/>
    </location>
</feature>
<feature type="strand" evidence="16">
    <location>
        <begin position="57"/>
        <end position="59"/>
    </location>
</feature>
<feature type="strand" evidence="14">
    <location>
        <begin position="67"/>
        <end position="70"/>
    </location>
</feature>
<feature type="strand" evidence="11">
    <location>
        <begin position="78"/>
        <end position="83"/>
    </location>
</feature>
<feature type="strand" evidence="12">
    <location>
        <begin position="86"/>
        <end position="88"/>
    </location>
</feature>
<feature type="helix" evidence="11">
    <location>
        <begin position="91"/>
        <end position="94"/>
    </location>
</feature>
<feature type="strand" evidence="11">
    <location>
        <begin position="98"/>
        <end position="103"/>
    </location>
</feature>
<feature type="strand" evidence="12">
    <location>
        <begin position="105"/>
        <end position="107"/>
    </location>
</feature>
<feature type="strand" evidence="13">
    <location>
        <begin position="109"/>
        <end position="114"/>
    </location>
</feature>
<feature type="helix" evidence="11">
    <location>
        <begin position="116"/>
        <end position="118"/>
    </location>
</feature>
<feature type="strand" evidence="16">
    <location>
        <begin position="121"/>
        <end position="123"/>
    </location>
</feature>
<feature type="helix" evidence="13">
    <location>
        <begin position="125"/>
        <end position="128"/>
    </location>
</feature>
<feature type="helix" evidence="17">
    <location>
        <begin position="129"/>
        <end position="160"/>
    </location>
</feature>
<feature type="strand" evidence="17">
    <location>
        <begin position="161"/>
        <end position="164"/>
    </location>
</feature>
<feature type="helix" evidence="17">
    <location>
        <begin position="168"/>
        <end position="193"/>
    </location>
</feature>
<feature type="helix" evidence="14">
    <location>
        <begin position="197"/>
        <end position="200"/>
    </location>
</feature>
<feature type="strand" evidence="15">
    <location>
        <begin position="205"/>
        <end position="208"/>
    </location>
</feature>
<feature type="helix" evidence="17">
    <location>
        <begin position="211"/>
        <end position="246"/>
    </location>
</feature>
<feature type="strand" evidence="16">
    <location>
        <begin position="247"/>
        <end position="249"/>
    </location>
</feature>
<feature type="turn" evidence="14">
    <location>
        <begin position="252"/>
        <end position="255"/>
    </location>
</feature>
<feature type="helix" evidence="17">
    <location>
        <begin position="256"/>
        <end position="264"/>
    </location>
</feature>
<feature type="helix" evidence="17">
    <location>
        <begin position="266"/>
        <end position="280"/>
    </location>
</feature>
<feature type="strand" evidence="17">
    <location>
        <begin position="285"/>
        <end position="287"/>
    </location>
</feature>
<feature type="helix" evidence="17">
    <location>
        <begin position="293"/>
        <end position="328"/>
    </location>
</feature>
<feature type="helix" evidence="17">
    <location>
        <begin position="332"/>
        <end position="346"/>
    </location>
</feature>
<feature type="turn" evidence="17">
    <location>
        <begin position="347"/>
        <end position="350"/>
    </location>
</feature>
<feature type="helix" evidence="17">
    <location>
        <begin position="351"/>
        <end position="356"/>
    </location>
</feature>
<feature type="turn" evidence="14">
    <location>
        <begin position="362"/>
        <end position="364"/>
    </location>
</feature>
<feature type="helix" evidence="17">
    <location>
        <begin position="368"/>
        <end position="393"/>
    </location>
</feature>
<feature type="strand" evidence="17">
    <location>
        <begin position="396"/>
        <end position="398"/>
    </location>
</feature>
<feature type="helix" evidence="17">
    <location>
        <begin position="399"/>
        <end position="414"/>
    </location>
</feature>
<organism>
    <name type="scientific">Homo sapiens</name>
    <name type="common">Human</name>
    <dbReference type="NCBI Taxonomy" id="9606"/>
    <lineage>
        <taxon>Eukaryota</taxon>
        <taxon>Metazoa</taxon>
        <taxon>Chordata</taxon>
        <taxon>Craniata</taxon>
        <taxon>Vertebrata</taxon>
        <taxon>Euteleostomi</taxon>
        <taxon>Mammalia</taxon>
        <taxon>Eutheria</taxon>
        <taxon>Euarchontoglires</taxon>
        <taxon>Primates</taxon>
        <taxon>Haplorrhini</taxon>
        <taxon>Catarrhini</taxon>
        <taxon>Hominidae</taxon>
        <taxon>Homo</taxon>
    </lineage>
</organism>
<comment type="function">
    <text evidence="5 6">This is a receptor for GIP. The activity of this receptor is mediated by G proteins which activate adenylyl cyclase.</text>
</comment>
<comment type="subunit">
    <text evidence="3 4">May form homodimers and heterodimers with GLP1R.</text>
</comment>
<comment type="interaction">
    <interactant intactId="EBI-15653881">
        <id>P48546</id>
    </interactant>
    <interactant intactId="EBI-7629173">
        <id>P01275</id>
        <label>GCG</label>
    </interactant>
    <organismsDiffer>false</organismsDiffer>
    <experiments>2</experiments>
</comment>
<comment type="interaction">
    <interactant intactId="EBI-15653881">
        <id>P48546</id>
    </interactant>
    <interactant intactId="EBI-8588553">
        <id>P09681</id>
        <label>GIP</label>
    </interactant>
    <organismsDiffer>false</organismsDiffer>
    <experiments>3</experiments>
</comment>
<comment type="subcellular location">
    <subcellularLocation>
        <location evidence="9">Cell membrane</location>
        <topology evidence="1">Multi-pass membrane protein</topology>
    </subcellularLocation>
</comment>
<comment type="alternative products">
    <event type="alternative splicing"/>
    <isoform>
        <id>P48546-1</id>
        <name>1</name>
        <sequence type="displayed"/>
    </isoform>
    <isoform>
        <id>P48546-2</id>
        <name>2</name>
        <sequence type="described" ref="VSP_053867 VSP_053868"/>
    </isoform>
    <isoform>
        <id>P48546-3</id>
        <name>3</name>
        <sequence type="described" ref="VSP_053866"/>
    </isoform>
</comment>
<comment type="PTM">
    <text evidence="4">N-glycosylation is required for cell surface expression and lengthens receptor half-life by preventing degradation in the ER.</text>
</comment>
<comment type="similarity">
    <text evidence="9">Belongs to the G-protein coupled receptor 2 family.</text>
</comment>
<comment type="sequence caution" evidence="9">
    <conflict type="frameshift">
        <sequence resource="EMBL-CDS" id="CAA57426"/>
    </conflict>
</comment>
<sequence>MTTSPILQLLLRLSLCGLLLQRAETGSKGQTAGELYQRWERYRRECQETLAAAEPPSGLACNGSFDMYVCWDYAAPNATARASCPWYLPWHHHVAAGFVLRQCGSDGQWGLWRDHTQCENPEKNEAFLDQRLILERLQVMYTVGYSLSLATLLLALLILSLFRRLHCTRNYIHINLFTSFMLRAAAILSRDRLLPRPGPYLGDQALALWNQALAACRTAQIVTQYCVGANYTWLLVEGVYLHSLLVLVGGSEEGHFRYYLLLGWGAPALFVIPWVIVRYLYENTQCWERNEVKAIWWIIRTPILMTILINFLIFIRILGILLSKLRTRQMRCRDYRLRLARSTLTLVPLLGVHEVVFAPVTEEQARGALRFAKLGFEIFLSSFQGFLVSVLYCFINKEVQSEIRRGWHHCRLRRSLGEEQRQLPERAFRALPSGSGPGEVPTSRGLSSGTLPGPGNEASRELESYC</sequence>